<proteinExistence type="inferred from homology"/>
<organism>
    <name type="scientific">Idiomarina loihiensis (strain ATCC BAA-735 / DSM 15497 / L2-TR)</name>
    <dbReference type="NCBI Taxonomy" id="283942"/>
    <lineage>
        <taxon>Bacteria</taxon>
        <taxon>Pseudomonadati</taxon>
        <taxon>Pseudomonadota</taxon>
        <taxon>Gammaproteobacteria</taxon>
        <taxon>Alteromonadales</taxon>
        <taxon>Idiomarinaceae</taxon>
        <taxon>Idiomarina</taxon>
    </lineage>
</organism>
<reference key="1">
    <citation type="journal article" date="2004" name="Proc. Natl. Acad. Sci. U.S.A.">
        <title>Genome sequence of the deep-sea gamma-proteobacterium Idiomarina loihiensis reveals amino acid fermentation as a source of carbon and energy.</title>
        <authorList>
            <person name="Hou S."/>
            <person name="Saw J.H."/>
            <person name="Lee K.S."/>
            <person name="Freitas T.A."/>
            <person name="Belisle C."/>
            <person name="Kawarabayasi Y."/>
            <person name="Donachie S.P."/>
            <person name="Pikina A."/>
            <person name="Galperin M.Y."/>
            <person name="Koonin E.V."/>
            <person name="Makarova K.S."/>
            <person name="Omelchenko M.V."/>
            <person name="Sorokin A."/>
            <person name="Wolf Y.I."/>
            <person name="Li Q.X."/>
            <person name="Keum Y.S."/>
            <person name="Campbell S."/>
            <person name="Denery J."/>
            <person name="Aizawa S."/>
            <person name="Shibata S."/>
            <person name="Malahoff A."/>
            <person name="Alam M."/>
        </authorList>
    </citation>
    <scope>NUCLEOTIDE SEQUENCE [LARGE SCALE GENOMIC DNA]</scope>
    <source>
        <strain>ATCC BAA-735 / DSM 15497 / L2-TR</strain>
    </source>
</reference>
<protein>
    <recommendedName>
        <fullName evidence="1">Na(+)-translocating NADH-quinone reductase subunit E</fullName>
        <shortName evidence="1">Na(+)-NQR subunit E</shortName>
        <shortName evidence="1">Na(+)-translocating NQR subunit E</shortName>
        <ecNumber evidence="1">7.2.1.1</ecNumber>
    </recommendedName>
    <alternativeName>
        <fullName evidence="1">NQR complex subunit E</fullName>
    </alternativeName>
    <alternativeName>
        <fullName evidence="1">NQR-1 subunit E</fullName>
    </alternativeName>
</protein>
<comment type="function">
    <text evidence="1">NQR complex catalyzes the reduction of ubiquinone-1 to ubiquinol by two successive reactions, coupled with the transport of Na(+) ions from the cytoplasm to the periplasm. NqrA to NqrE are probably involved in the second step, the conversion of ubisemiquinone to ubiquinol.</text>
</comment>
<comment type="catalytic activity">
    <reaction evidence="1">
        <text>a ubiquinone + n Na(+)(in) + NADH + H(+) = a ubiquinol + n Na(+)(out) + NAD(+)</text>
        <dbReference type="Rhea" id="RHEA:47748"/>
        <dbReference type="Rhea" id="RHEA-COMP:9565"/>
        <dbReference type="Rhea" id="RHEA-COMP:9566"/>
        <dbReference type="ChEBI" id="CHEBI:15378"/>
        <dbReference type="ChEBI" id="CHEBI:16389"/>
        <dbReference type="ChEBI" id="CHEBI:17976"/>
        <dbReference type="ChEBI" id="CHEBI:29101"/>
        <dbReference type="ChEBI" id="CHEBI:57540"/>
        <dbReference type="ChEBI" id="CHEBI:57945"/>
        <dbReference type="EC" id="7.2.1.1"/>
    </reaction>
</comment>
<comment type="subunit">
    <text evidence="1">Composed of six subunits; NqrA, NqrB, NqrC, NqrD, NqrE and NqrF.</text>
</comment>
<comment type="subcellular location">
    <subcellularLocation>
        <location evidence="1">Cell inner membrane</location>
        <topology evidence="1">Multi-pass membrane protein</topology>
    </subcellularLocation>
</comment>
<comment type="similarity">
    <text evidence="1">Belongs to the NqrDE/RnfAE family.</text>
</comment>
<gene>
    <name evidence="1" type="primary">nqrE</name>
    <name type="ordered locus">IL1046</name>
</gene>
<evidence type="ECO:0000255" key="1">
    <source>
        <dbReference type="HAMAP-Rule" id="MF_00429"/>
    </source>
</evidence>
<accession>Q5QYQ7</accession>
<feature type="chain" id="PRO_1000060196" description="Na(+)-translocating NADH-quinone reductase subunit E">
    <location>
        <begin position="1"/>
        <end position="202"/>
    </location>
</feature>
<feature type="transmembrane region" description="Helical" evidence="1">
    <location>
        <begin position="11"/>
        <end position="31"/>
    </location>
</feature>
<feature type="transmembrane region" description="Helical" evidence="1">
    <location>
        <begin position="39"/>
        <end position="59"/>
    </location>
</feature>
<feature type="transmembrane region" description="Helical" evidence="1">
    <location>
        <begin position="81"/>
        <end position="101"/>
    </location>
</feature>
<feature type="transmembrane region" description="Helical" evidence="1">
    <location>
        <begin position="114"/>
        <end position="134"/>
    </location>
</feature>
<feature type="transmembrane region" description="Helical" evidence="1">
    <location>
        <begin position="144"/>
        <end position="164"/>
    </location>
</feature>
<feature type="transmembrane region" description="Helical" evidence="1">
    <location>
        <begin position="180"/>
        <end position="200"/>
    </location>
</feature>
<keyword id="KW-0997">Cell inner membrane</keyword>
<keyword id="KW-1003">Cell membrane</keyword>
<keyword id="KW-0406">Ion transport</keyword>
<keyword id="KW-0472">Membrane</keyword>
<keyword id="KW-0520">NAD</keyword>
<keyword id="KW-1185">Reference proteome</keyword>
<keyword id="KW-0915">Sodium</keyword>
<keyword id="KW-0739">Sodium transport</keyword>
<keyword id="KW-1278">Translocase</keyword>
<keyword id="KW-0812">Transmembrane</keyword>
<keyword id="KW-1133">Transmembrane helix</keyword>
<keyword id="KW-0813">Transport</keyword>
<keyword id="KW-0830">Ubiquinone</keyword>
<sequence length="202" mass="21553">MENYINLFIRAVFIENLALSFFLGMCTFLAVSKKVKTAFGLGVAVIVVLGISVPVNNLIYHNILAPGALEWAGFPDADLSFLKFLTFIGVIAAIVQILEMALDKYVPALYNALGIFLPLITVNCAIFGGVAFMVERDYNFGESVVFGIGSGVGWALAIVALAAVREKLKYADVPDGLRGLGITFISVGLIGLGFMSFSGVSL</sequence>
<dbReference type="EC" id="7.2.1.1" evidence="1"/>
<dbReference type="EMBL" id="AE017340">
    <property type="protein sequence ID" value="AAV81886.1"/>
    <property type="molecule type" value="Genomic_DNA"/>
</dbReference>
<dbReference type="RefSeq" id="WP_011234297.1">
    <property type="nucleotide sequence ID" value="NC_006512.1"/>
</dbReference>
<dbReference type="SMR" id="Q5QYQ7"/>
<dbReference type="STRING" id="283942.IL1046"/>
<dbReference type="GeneID" id="41336212"/>
<dbReference type="KEGG" id="ilo:IL1046"/>
<dbReference type="eggNOG" id="COG2209">
    <property type="taxonomic scope" value="Bacteria"/>
</dbReference>
<dbReference type="HOGENOM" id="CLU_095255_0_0_6"/>
<dbReference type="OrthoDB" id="9803631at2"/>
<dbReference type="Proteomes" id="UP000001171">
    <property type="component" value="Chromosome"/>
</dbReference>
<dbReference type="GO" id="GO:0009276">
    <property type="term" value="C:Gram-negative-bacterium-type cell wall"/>
    <property type="evidence" value="ECO:0007669"/>
    <property type="project" value="InterPro"/>
</dbReference>
<dbReference type="GO" id="GO:0005886">
    <property type="term" value="C:plasma membrane"/>
    <property type="evidence" value="ECO:0007669"/>
    <property type="project" value="UniProtKB-SubCell"/>
</dbReference>
<dbReference type="GO" id="GO:0016655">
    <property type="term" value="F:oxidoreductase activity, acting on NAD(P)H, quinone or similar compound as acceptor"/>
    <property type="evidence" value="ECO:0007669"/>
    <property type="project" value="UniProtKB-UniRule"/>
</dbReference>
<dbReference type="GO" id="GO:0022904">
    <property type="term" value="P:respiratory electron transport chain"/>
    <property type="evidence" value="ECO:0007669"/>
    <property type="project" value="InterPro"/>
</dbReference>
<dbReference type="GO" id="GO:0006814">
    <property type="term" value="P:sodium ion transport"/>
    <property type="evidence" value="ECO:0007669"/>
    <property type="project" value="UniProtKB-UniRule"/>
</dbReference>
<dbReference type="HAMAP" id="MF_00429">
    <property type="entry name" value="NqrE"/>
    <property type="match status" value="1"/>
</dbReference>
<dbReference type="InterPro" id="IPR003667">
    <property type="entry name" value="NqrDE/RnfAE"/>
</dbReference>
<dbReference type="InterPro" id="IPR050133">
    <property type="entry name" value="NqrDE/RnfAE_oxidrdctase"/>
</dbReference>
<dbReference type="InterPro" id="IPR010967">
    <property type="entry name" value="NqrE"/>
</dbReference>
<dbReference type="NCBIfam" id="TIGR01940">
    <property type="entry name" value="nqrE"/>
    <property type="match status" value="1"/>
</dbReference>
<dbReference type="PANTHER" id="PTHR30335">
    <property type="entry name" value="INTEGRAL MEMBRANE PROTEIN OF SOXR-REDUCING COMPLEX"/>
    <property type="match status" value="1"/>
</dbReference>
<dbReference type="PANTHER" id="PTHR30335:SF1">
    <property type="entry name" value="NA(+)-TRANSLOCATING NADH-QUINONE REDUCTASE SUBUNIT E"/>
    <property type="match status" value="1"/>
</dbReference>
<dbReference type="Pfam" id="PF02508">
    <property type="entry name" value="Rnf-Nqr"/>
    <property type="match status" value="1"/>
</dbReference>
<dbReference type="PIRSF" id="PIRSF006102">
    <property type="entry name" value="NQR_DE"/>
    <property type="match status" value="1"/>
</dbReference>
<name>NQRE_IDILO</name>